<proteinExistence type="inferred from homology"/>
<evidence type="ECO:0000305" key="1"/>
<accession>P39631</accession>
<feature type="chain" id="PRO_0000207990" description="Spore coat polysaccharide biosynthesis protein SpsK">
    <location>
        <begin position="1"/>
        <end position="283"/>
    </location>
</feature>
<feature type="sequence conflict" description="In Ref. 1; CAA51629." evidence="1" ref="1">
    <original>R</original>
    <variation>P</variation>
    <location>
        <position position="265"/>
    </location>
</feature>
<comment type="pathway">
    <text>Spore coat biogenesis; spore coat polysaccharide biosynthesis.</text>
</comment>
<comment type="similarity">
    <text evidence="1">Belongs to the dTDP-4-dehydrorhamnose reductase family.</text>
</comment>
<comment type="sequence caution" evidence="1">
    <conflict type="frameshift">
        <sequence resource="EMBL-CDS" id="CAA51629"/>
    </conflict>
</comment>
<dbReference type="EMBL" id="X73124">
    <property type="protein sequence ID" value="CAA51629.1"/>
    <property type="status" value="ALT_FRAME"/>
    <property type="molecule type" value="Genomic_DNA"/>
</dbReference>
<dbReference type="EMBL" id="AL009126">
    <property type="protein sequence ID" value="CAB15808.3"/>
    <property type="molecule type" value="Genomic_DNA"/>
</dbReference>
<dbReference type="PIR" id="S39728">
    <property type="entry name" value="S39728"/>
</dbReference>
<dbReference type="RefSeq" id="NP_391661.3">
    <property type="nucleotide sequence ID" value="NC_000964.3"/>
</dbReference>
<dbReference type="SMR" id="P39631"/>
<dbReference type="FunCoup" id="P39631">
    <property type="interactions" value="545"/>
</dbReference>
<dbReference type="STRING" id="224308.BSU37820"/>
<dbReference type="PaxDb" id="224308-BSU37820"/>
<dbReference type="EnsemblBacteria" id="CAB15808">
    <property type="protein sequence ID" value="CAB15808"/>
    <property type="gene ID" value="BSU_37820"/>
</dbReference>
<dbReference type="GeneID" id="937225"/>
<dbReference type="KEGG" id="bsu:BSU37820"/>
<dbReference type="PATRIC" id="fig|224308.179.peg.4095"/>
<dbReference type="eggNOG" id="COG1091">
    <property type="taxonomic scope" value="Bacteria"/>
</dbReference>
<dbReference type="InParanoid" id="P39631"/>
<dbReference type="OrthoDB" id="9803892at2"/>
<dbReference type="PhylomeDB" id="P39631"/>
<dbReference type="BioCyc" id="BSUB:BSU37820-MONOMER"/>
<dbReference type="UniPathway" id="UPA00953"/>
<dbReference type="Proteomes" id="UP000001570">
    <property type="component" value="Chromosome"/>
</dbReference>
<dbReference type="GO" id="GO:0005829">
    <property type="term" value="C:cytosol"/>
    <property type="evidence" value="ECO:0000318"/>
    <property type="project" value="GO_Central"/>
</dbReference>
<dbReference type="GO" id="GO:0008831">
    <property type="term" value="F:dTDP-4-dehydrorhamnose reductase activity"/>
    <property type="evidence" value="ECO:0000318"/>
    <property type="project" value="GO_Central"/>
</dbReference>
<dbReference type="GO" id="GO:0019305">
    <property type="term" value="P:dTDP-rhamnose biosynthetic process"/>
    <property type="evidence" value="ECO:0000318"/>
    <property type="project" value="GO_Central"/>
</dbReference>
<dbReference type="GO" id="GO:0000271">
    <property type="term" value="P:polysaccharide biosynthetic process"/>
    <property type="evidence" value="ECO:0000318"/>
    <property type="project" value="GO_Central"/>
</dbReference>
<dbReference type="CDD" id="cd05254">
    <property type="entry name" value="dTDP_HR_like_SDR_e"/>
    <property type="match status" value="1"/>
</dbReference>
<dbReference type="FunFam" id="3.40.50.720:FF:000159">
    <property type="entry name" value="dTDP-4-dehydrorhamnose reductase"/>
    <property type="match status" value="1"/>
</dbReference>
<dbReference type="Gene3D" id="3.40.50.720">
    <property type="entry name" value="NAD(P)-binding Rossmann-like Domain"/>
    <property type="match status" value="1"/>
</dbReference>
<dbReference type="Gene3D" id="3.90.25.10">
    <property type="entry name" value="UDP-galactose 4-epimerase, domain 1"/>
    <property type="match status" value="1"/>
</dbReference>
<dbReference type="InterPro" id="IPR005913">
    <property type="entry name" value="dTDP_dehydrorham_reduct"/>
</dbReference>
<dbReference type="InterPro" id="IPR036291">
    <property type="entry name" value="NAD(P)-bd_dom_sf"/>
</dbReference>
<dbReference type="InterPro" id="IPR029903">
    <property type="entry name" value="RmlD-like-bd"/>
</dbReference>
<dbReference type="NCBIfam" id="TIGR01214">
    <property type="entry name" value="rmlD"/>
    <property type="match status" value="1"/>
</dbReference>
<dbReference type="PANTHER" id="PTHR10491">
    <property type="entry name" value="DTDP-4-DEHYDRORHAMNOSE REDUCTASE"/>
    <property type="match status" value="1"/>
</dbReference>
<dbReference type="PANTHER" id="PTHR10491:SF4">
    <property type="entry name" value="METHIONINE ADENOSYLTRANSFERASE 2 SUBUNIT BETA"/>
    <property type="match status" value="1"/>
</dbReference>
<dbReference type="Pfam" id="PF04321">
    <property type="entry name" value="RmlD_sub_bind"/>
    <property type="match status" value="1"/>
</dbReference>
<dbReference type="SUPFAM" id="SSF51735">
    <property type="entry name" value="NAD(P)-binding Rossmann-fold domains"/>
    <property type="match status" value="1"/>
</dbReference>
<gene>
    <name type="primary">spsK</name>
    <name type="ordered locus">BSU37820</name>
    <name type="ORF">ipa-73d</name>
</gene>
<reference key="1">
    <citation type="journal article" date="1993" name="Mol. Microbiol.">
        <title>Bacillus subtilis genome project: cloning and sequencing of the 97 kb region from 325 degrees to 333 degrees.</title>
        <authorList>
            <person name="Glaser P."/>
            <person name="Kunst F."/>
            <person name="Arnaud M."/>
            <person name="Coudart M.P."/>
            <person name="Gonzales W."/>
            <person name="Hullo M.-F."/>
            <person name="Ionescu M."/>
            <person name="Lubochinsky B."/>
            <person name="Marcelino L."/>
            <person name="Moszer I."/>
            <person name="Presecan E."/>
            <person name="Santana M."/>
            <person name="Schneider E."/>
            <person name="Schweizer J."/>
            <person name="Vertes A."/>
            <person name="Rapoport G."/>
            <person name="Danchin A."/>
        </authorList>
    </citation>
    <scope>NUCLEOTIDE SEQUENCE [GENOMIC DNA]</scope>
    <source>
        <strain>168</strain>
    </source>
</reference>
<reference key="2">
    <citation type="journal article" date="1997" name="Nature">
        <title>The complete genome sequence of the Gram-positive bacterium Bacillus subtilis.</title>
        <authorList>
            <person name="Kunst F."/>
            <person name="Ogasawara N."/>
            <person name="Moszer I."/>
            <person name="Albertini A.M."/>
            <person name="Alloni G."/>
            <person name="Azevedo V."/>
            <person name="Bertero M.G."/>
            <person name="Bessieres P."/>
            <person name="Bolotin A."/>
            <person name="Borchert S."/>
            <person name="Borriss R."/>
            <person name="Boursier L."/>
            <person name="Brans A."/>
            <person name="Braun M."/>
            <person name="Brignell S.C."/>
            <person name="Bron S."/>
            <person name="Brouillet S."/>
            <person name="Bruschi C.V."/>
            <person name="Caldwell B."/>
            <person name="Capuano V."/>
            <person name="Carter N.M."/>
            <person name="Choi S.-K."/>
            <person name="Codani J.-J."/>
            <person name="Connerton I.F."/>
            <person name="Cummings N.J."/>
            <person name="Daniel R.A."/>
            <person name="Denizot F."/>
            <person name="Devine K.M."/>
            <person name="Duesterhoeft A."/>
            <person name="Ehrlich S.D."/>
            <person name="Emmerson P.T."/>
            <person name="Entian K.-D."/>
            <person name="Errington J."/>
            <person name="Fabret C."/>
            <person name="Ferrari E."/>
            <person name="Foulger D."/>
            <person name="Fritz C."/>
            <person name="Fujita M."/>
            <person name="Fujita Y."/>
            <person name="Fuma S."/>
            <person name="Galizzi A."/>
            <person name="Galleron N."/>
            <person name="Ghim S.-Y."/>
            <person name="Glaser P."/>
            <person name="Goffeau A."/>
            <person name="Golightly E.J."/>
            <person name="Grandi G."/>
            <person name="Guiseppi G."/>
            <person name="Guy B.J."/>
            <person name="Haga K."/>
            <person name="Haiech J."/>
            <person name="Harwood C.R."/>
            <person name="Henaut A."/>
            <person name="Hilbert H."/>
            <person name="Holsappel S."/>
            <person name="Hosono S."/>
            <person name="Hullo M.-F."/>
            <person name="Itaya M."/>
            <person name="Jones L.-M."/>
            <person name="Joris B."/>
            <person name="Karamata D."/>
            <person name="Kasahara Y."/>
            <person name="Klaerr-Blanchard M."/>
            <person name="Klein C."/>
            <person name="Kobayashi Y."/>
            <person name="Koetter P."/>
            <person name="Koningstein G."/>
            <person name="Krogh S."/>
            <person name="Kumano M."/>
            <person name="Kurita K."/>
            <person name="Lapidus A."/>
            <person name="Lardinois S."/>
            <person name="Lauber J."/>
            <person name="Lazarevic V."/>
            <person name="Lee S.-M."/>
            <person name="Levine A."/>
            <person name="Liu H."/>
            <person name="Masuda S."/>
            <person name="Mauel C."/>
            <person name="Medigue C."/>
            <person name="Medina N."/>
            <person name="Mellado R.P."/>
            <person name="Mizuno M."/>
            <person name="Moestl D."/>
            <person name="Nakai S."/>
            <person name="Noback M."/>
            <person name="Noone D."/>
            <person name="O'Reilly M."/>
            <person name="Ogawa K."/>
            <person name="Ogiwara A."/>
            <person name="Oudega B."/>
            <person name="Park S.-H."/>
            <person name="Parro V."/>
            <person name="Pohl T.M."/>
            <person name="Portetelle D."/>
            <person name="Porwollik S."/>
            <person name="Prescott A.M."/>
            <person name="Presecan E."/>
            <person name="Pujic P."/>
            <person name="Purnelle B."/>
            <person name="Rapoport G."/>
            <person name="Rey M."/>
            <person name="Reynolds S."/>
            <person name="Rieger M."/>
            <person name="Rivolta C."/>
            <person name="Rocha E."/>
            <person name="Roche B."/>
            <person name="Rose M."/>
            <person name="Sadaie Y."/>
            <person name="Sato T."/>
            <person name="Scanlan E."/>
            <person name="Schleich S."/>
            <person name="Schroeter R."/>
            <person name="Scoffone F."/>
            <person name="Sekiguchi J."/>
            <person name="Sekowska A."/>
            <person name="Seror S.J."/>
            <person name="Serror P."/>
            <person name="Shin B.-S."/>
            <person name="Soldo B."/>
            <person name="Sorokin A."/>
            <person name="Tacconi E."/>
            <person name="Takagi T."/>
            <person name="Takahashi H."/>
            <person name="Takemaru K."/>
            <person name="Takeuchi M."/>
            <person name="Tamakoshi A."/>
            <person name="Tanaka T."/>
            <person name="Terpstra P."/>
            <person name="Tognoni A."/>
            <person name="Tosato V."/>
            <person name="Uchiyama S."/>
            <person name="Vandenbol M."/>
            <person name="Vannier F."/>
            <person name="Vassarotti A."/>
            <person name="Viari A."/>
            <person name="Wambutt R."/>
            <person name="Wedler E."/>
            <person name="Wedler H."/>
            <person name="Weitzenegger T."/>
            <person name="Winters P."/>
            <person name="Wipat A."/>
            <person name="Yamamoto H."/>
            <person name="Yamane K."/>
            <person name="Yasumoto K."/>
            <person name="Yata K."/>
            <person name="Yoshida K."/>
            <person name="Yoshikawa H.-F."/>
            <person name="Zumstein E."/>
            <person name="Yoshikawa H."/>
            <person name="Danchin A."/>
        </authorList>
    </citation>
    <scope>NUCLEOTIDE SEQUENCE [LARGE SCALE GENOMIC DNA]</scope>
    <source>
        <strain>168</strain>
    </source>
</reference>
<reference key="3">
    <citation type="journal article" date="1999" name="Genome Res.">
        <title>Detecting and analyzing DNA sequencing errors: toward a higher quality of the Bacillus subtilis genome sequence.</title>
        <authorList>
            <person name="Medigue C."/>
            <person name="Rose M."/>
            <person name="Viari A."/>
            <person name="Danchin A."/>
        </authorList>
    </citation>
    <scope>SEQUENCE REVISION</scope>
</reference>
<reference key="4">
    <citation type="journal article" date="2009" name="Microbiology">
        <title>From a consortium sequence to a unified sequence: the Bacillus subtilis 168 reference genome a decade later.</title>
        <authorList>
            <person name="Barbe V."/>
            <person name="Cruveiller S."/>
            <person name="Kunst F."/>
            <person name="Lenoble P."/>
            <person name="Meurice G."/>
            <person name="Sekowska A."/>
            <person name="Vallenet D."/>
            <person name="Wang T."/>
            <person name="Moszer I."/>
            <person name="Medigue C."/>
            <person name="Danchin A."/>
        </authorList>
    </citation>
    <scope>SEQUENCE REVISION TO 265</scope>
</reference>
<organism>
    <name type="scientific">Bacillus subtilis (strain 168)</name>
    <dbReference type="NCBI Taxonomy" id="224308"/>
    <lineage>
        <taxon>Bacteria</taxon>
        <taxon>Bacillati</taxon>
        <taxon>Bacillota</taxon>
        <taxon>Bacilli</taxon>
        <taxon>Bacillales</taxon>
        <taxon>Bacillaceae</taxon>
        <taxon>Bacillus</taxon>
    </lineage>
</organism>
<protein>
    <recommendedName>
        <fullName>Spore coat polysaccharide biosynthesis protein SpsK</fullName>
    </recommendedName>
</protein>
<keyword id="KW-0521">NADP</keyword>
<keyword id="KW-0560">Oxidoreductase</keyword>
<keyword id="KW-1185">Reference proteome</keyword>
<name>SPSK_BACSU</name>
<sequence length="283" mass="31642">MTKVLVTGAGGQLGLELCRQLKQAGYEVIALTKKMMNIADQRSVRHSFGHYQPDIVVNSAAFTSVDQCEKELDKAYLINGIGAYYTALESTRIGAQYVHISTDYVFNGKGTQPYREDDPLDPKTIYGKSKRLGEELIRLTTKDSTIIRTSWVYGHGGSNFVETMLKLAETKQELRVVSDQIGSPTYTKDLAEAVIKLFSHPPGIYHVSNSGICSWYEFATAIMEESGLETAILSVTTEEYGNKTPRPAYSVLSHRAIEEAGIRPRHWREALREYLQERSSACD</sequence>